<sequence length="405" mass="42928">MAPWPPGNSSLTPWPDIPTLAPNTANASGLPGVPWAVALAGALLALAVLATVGGNLLVIVAIARTPRLQTMTNVFVTSLATADLVVGLLVVPPGATLALTGHWPLGVTGCELWTSVDVLCVTASIETLCALAVDRYLAVTNPLRYGALVTKRRARAAVVLVWVVSAAVSFAPIMSKWWRVGADAEAQRCHSNPRCCTFASNMPYALLSSSVSFYLPLLVMLFVYARVFVVATRQLRLLRRELGRFPPEESPPAPSRSGSPGPAGPYASPAGVPSYGRRPARLLPLREHRALRTLGLIMGTFTLCWLPFFVVNVVRALGGPSLVSGPTFLALNWLGYANSAFNPLIYCRSPDFRSAFRRLLCRCPPEEHLAAASPPRAPSGAPTVLTSPAGPRQPSPLDGASCGLS</sequence>
<protein>
    <recommendedName>
        <fullName>Beta-3 adrenergic receptor</fullName>
    </recommendedName>
    <alternativeName>
        <fullName>Beta-3 adrenoreceptor</fullName>
        <shortName>Beta-3 adrenoceptor</shortName>
    </alternativeName>
</protein>
<gene>
    <name type="primary">ADRB3</name>
    <name type="synonym">B3AR</name>
</gene>
<reference key="1">
    <citation type="journal article" date="2000" name="J. Anim. Sci.">
        <title>Rapid communication: nucleotide sequences of the bovine, caprine, and ovine beta3-adrenergic receptor genes.</title>
        <authorList>
            <person name="Forrest R.H."/>
            <person name="Hickford J.G.H."/>
        </authorList>
    </citation>
    <scope>NUCLEOTIDE SEQUENCE [GENOMIC DNA]</scope>
    <source>
        <strain>Merino</strain>
    </source>
</reference>
<reference key="2">
    <citation type="journal article" date="2003" name="Anim. Genet.">
        <title>Polymorphism at the ovine beta3-adrenergic receptor locus: associations with birth weight, growth rate, carcass composition and cold survival.</title>
        <authorList>
            <person name="Forrest R.H."/>
            <person name="Hickford J.G.H."/>
            <person name="Hogan A."/>
            <person name="Frampton C."/>
        </authorList>
    </citation>
    <scope>NUCLEOTIDE SEQUENCE [GENOMIC DNA]</scope>
    <scope>VARIANTS ALA-52; VAL-270; VAL-322 AND GLN-376</scope>
    <source>
        <strain>Dorset Down</strain>
        <strain>Merino</strain>
    </source>
</reference>
<proteinExistence type="inferred from homology"/>
<comment type="function">
    <text>Beta-adrenergic receptors mediate the catecholamine-induced activation of adenylate cyclase through the action of G proteins. Beta-3 is involved in the regulation of lipolysis and thermogenesis.</text>
</comment>
<comment type="subunit">
    <text evidence="2">Interacts with ARRDC3.</text>
</comment>
<comment type="subcellular location">
    <subcellularLocation>
        <location>Cell membrane</location>
        <topology>Multi-pass membrane protein</topology>
    </subcellularLocation>
</comment>
<comment type="similarity">
    <text evidence="4">Belongs to the G-protein coupled receptor 1 family. Adrenergic receptor subfamily. ADRB3 sub-subfamily.</text>
</comment>
<name>ADRB3_SHEEP</name>
<dbReference type="EMBL" id="AF109928">
    <property type="protein sequence ID" value="AAD26147.1"/>
    <property type="molecule type" value="Genomic_DNA"/>
</dbReference>
<dbReference type="EMBL" id="AF314200">
    <property type="protein sequence ID" value="AAG31163.1"/>
    <property type="molecule type" value="Genomic_DNA"/>
</dbReference>
<dbReference type="EMBL" id="AF314201">
    <property type="protein sequence ID" value="AAG31164.1"/>
    <property type="molecule type" value="Genomic_DNA"/>
</dbReference>
<dbReference type="EMBL" id="AF314202">
    <property type="protein sequence ID" value="AAG31165.1"/>
    <property type="molecule type" value="Genomic_DNA"/>
</dbReference>
<dbReference type="EMBL" id="AF314203">
    <property type="protein sequence ID" value="AAG31166.1"/>
    <property type="molecule type" value="Genomic_DNA"/>
</dbReference>
<dbReference type="EMBL" id="AF314204">
    <property type="protein sequence ID" value="AAG31167.1"/>
    <property type="molecule type" value="Genomic_DNA"/>
</dbReference>
<dbReference type="EMBL" id="AF314205">
    <property type="protein sequence ID" value="AAG31168.1"/>
    <property type="molecule type" value="Genomic_DNA"/>
</dbReference>
<dbReference type="RefSeq" id="NP_001153229.1">
    <property type="nucleotide sequence ID" value="NM_001159757.1"/>
</dbReference>
<dbReference type="SMR" id="Q9XT58"/>
<dbReference type="STRING" id="9940.ENSOARP00000001138"/>
<dbReference type="GlyCosmos" id="Q9XT58">
    <property type="glycosylation" value="2 sites, No reported glycans"/>
</dbReference>
<dbReference type="PaxDb" id="9940-ENSOARP00000001138"/>
<dbReference type="GeneID" id="100294559"/>
<dbReference type="KEGG" id="oas:100294559"/>
<dbReference type="CTD" id="155"/>
<dbReference type="eggNOG" id="KOG3656">
    <property type="taxonomic scope" value="Eukaryota"/>
</dbReference>
<dbReference type="OrthoDB" id="5983033at2759"/>
<dbReference type="Proteomes" id="UP000002356">
    <property type="component" value="Unplaced"/>
</dbReference>
<dbReference type="GO" id="GO:0005886">
    <property type="term" value="C:plasma membrane"/>
    <property type="evidence" value="ECO:0007669"/>
    <property type="project" value="UniProtKB-SubCell"/>
</dbReference>
<dbReference type="GO" id="GO:0043235">
    <property type="term" value="C:receptor complex"/>
    <property type="evidence" value="ECO:0000250"/>
    <property type="project" value="HGNC-UCL"/>
</dbReference>
<dbReference type="GO" id="GO:0004939">
    <property type="term" value="F:beta-adrenergic receptor activity"/>
    <property type="evidence" value="ECO:0000250"/>
    <property type="project" value="HGNC-UCL"/>
</dbReference>
<dbReference type="GO" id="GO:0015052">
    <property type="term" value="F:beta3-adrenergic receptor activity"/>
    <property type="evidence" value="ECO:0000250"/>
    <property type="project" value="HGNC-UCL"/>
</dbReference>
<dbReference type="GO" id="GO:0051379">
    <property type="term" value="F:epinephrine binding"/>
    <property type="evidence" value="ECO:0007669"/>
    <property type="project" value="TreeGrafter"/>
</dbReference>
<dbReference type="GO" id="GO:0042803">
    <property type="term" value="F:protein homodimerization activity"/>
    <property type="evidence" value="ECO:0000250"/>
    <property type="project" value="HGNC-UCL"/>
</dbReference>
<dbReference type="GO" id="GO:0071880">
    <property type="term" value="P:adenylate cyclase-activating adrenergic receptor signaling pathway"/>
    <property type="evidence" value="ECO:0000250"/>
    <property type="project" value="HGNC-UCL"/>
</dbReference>
<dbReference type="GO" id="GO:0002025">
    <property type="term" value="P:norepinephrine-epinephrine-mediated vasodilation involved in regulation of systemic arterial blood pressure"/>
    <property type="evidence" value="ECO:0007669"/>
    <property type="project" value="TreeGrafter"/>
</dbReference>
<dbReference type="GO" id="GO:0043410">
    <property type="term" value="P:positive regulation of MAPK cascade"/>
    <property type="evidence" value="ECO:0000250"/>
    <property type="project" value="HGNC-UCL"/>
</dbReference>
<dbReference type="Gene3D" id="1.20.1070.10">
    <property type="entry name" value="Rhodopsin 7-helix transmembrane proteins"/>
    <property type="match status" value="1"/>
</dbReference>
<dbReference type="InterPro" id="IPR002233">
    <property type="entry name" value="ADR_fam"/>
</dbReference>
<dbReference type="InterPro" id="IPR000681">
    <property type="entry name" value="ADRB3_rcpt"/>
</dbReference>
<dbReference type="InterPro" id="IPR000276">
    <property type="entry name" value="GPCR_Rhodpsn"/>
</dbReference>
<dbReference type="InterPro" id="IPR017452">
    <property type="entry name" value="GPCR_Rhodpsn_7TM"/>
</dbReference>
<dbReference type="PANTHER" id="PTHR24248">
    <property type="entry name" value="ADRENERGIC RECEPTOR-RELATED G-PROTEIN COUPLED RECEPTOR"/>
    <property type="match status" value="1"/>
</dbReference>
<dbReference type="PANTHER" id="PTHR24248:SF3">
    <property type="entry name" value="BETA-3 ADRENERGIC RECEPTOR"/>
    <property type="match status" value="1"/>
</dbReference>
<dbReference type="Pfam" id="PF00001">
    <property type="entry name" value="7tm_1"/>
    <property type="match status" value="1"/>
</dbReference>
<dbReference type="PRINTS" id="PR01103">
    <property type="entry name" value="ADRENERGICR"/>
</dbReference>
<dbReference type="PRINTS" id="PR00563">
    <property type="entry name" value="ADRENRGCB3AR"/>
</dbReference>
<dbReference type="PRINTS" id="PR00237">
    <property type="entry name" value="GPCRRHODOPSN"/>
</dbReference>
<dbReference type="SMART" id="SM01381">
    <property type="entry name" value="7TM_GPCR_Srsx"/>
    <property type="match status" value="1"/>
</dbReference>
<dbReference type="SUPFAM" id="SSF81321">
    <property type="entry name" value="Family A G protein-coupled receptor-like"/>
    <property type="match status" value="1"/>
</dbReference>
<dbReference type="PROSITE" id="PS00237">
    <property type="entry name" value="G_PROTEIN_RECEP_F1_1"/>
    <property type="match status" value="1"/>
</dbReference>
<dbReference type="PROSITE" id="PS50262">
    <property type="entry name" value="G_PROTEIN_RECEP_F1_2"/>
    <property type="match status" value="1"/>
</dbReference>
<accession>Q9XT58</accession>
<accession>Q9GJS6</accession>
<accession>Q9GJT0</accession>
<accession>Q9GL56</accession>
<accession>Q9GL57</accession>
<feature type="chain" id="PRO_0000069149" description="Beta-3 adrenergic receptor">
    <location>
        <begin position="1"/>
        <end position="405"/>
    </location>
</feature>
<feature type="topological domain" description="Extracellular" evidence="1">
    <location>
        <begin position="1"/>
        <end position="36"/>
    </location>
</feature>
<feature type="transmembrane region" description="Helical; Name=1" evidence="1">
    <location>
        <begin position="37"/>
        <end position="63"/>
    </location>
</feature>
<feature type="topological domain" description="Cytoplasmic" evidence="1">
    <location>
        <begin position="64"/>
        <end position="72"/>
    </location>
</feature>
<feature type="transmembrane region" description="Helical; Name=2" evidence="1">
    <location>
        <begin position="73"/>
        <end position="91"/>
    </location>
</feature>
<feature type="topological domain" description="Extracellular" evidence="1">
    <location>
        <begin position="92"/>
        <end position="111"/>
    </location>
</feature>
<feature type="transmembrane region" description="Helical; Name=3" evidence="1">
    <location>
        <begin position="112"/>
        <end position="133"/>
    </location>
</feature>
<feature type="topological domain" description="Cytoplasmic" evidence="1">
    <location>
        <begin position="134"/>
        <end position="155"/>
    </location>
</feature>
<feature type="transmembrane region" description="Helical; Name=4" evidence="1">
    <location>
        <begin position="156"/>
        <end position="178"/>
    </location>
</feature>
<feature type="topological domain" description="Extracellular" evidence="1">
    <location>
        <begin position="179"/>
        <end position="203"/>
    </location>
</feature>
<feature type="transmembrane region" description="Helical; Name=5" evidence="1">
    <location>
        <begin position="204"/>
        <end position="225"/>
    </location>
</feature>
<feature type="topological domain" description="Cytoplasmic" evidence="1">
    <location>
        <begin position="226"/>
        <end position="292"/>
    </location>
</feature>
<feature type="transmembrane region" description="Helical; Name=6" evidence="1">
    <location>
        <begin position="293"/>
        <end position="314"/>
    </location>
</feature>
<feature type="topological domain" description="Extracellular" evidence="1">
    <location>
        <begin position="315"/>
        <end position="326"/>
    </location>
</feature>
<feature type="transmembrane region" description="Helical; Name=7" evidence="1">
    <location>
        <begin position="327"/>
        <end position="347"/>
    </location>
</feature>
<feature type="topological domain" description="Cytoplasmic" evidence="1">
    <location>
        <begin position="348"/>
        <end position="405"/>
    </location>
</feature>
<feature type="region of interest" description="Disordered" evidence="5">
    <location>
        <begin position="247"/>
        <end position="267"/>
    </location>
</feature>
<feature type="region of interest" description="Disordered" evidence="5">
    <location>
        <begin position="369"/>
        <end position="405"/>
    </location>
</feature>
<feature type="compositionally biased region" description="Low complexity" evidence="5">
    <location>
        <begin position="255"/>
        <end position="267"/>
    </location>
</feature>
<feature type="compositionally biased region" description="Low complexity" evidence="5">
    <location>
        <begin position="370"/>
        <end position="382"/>
    </location>
</feature>
<feature type="lipid moiety-binding region" description="S-palmitoyl cysteine" evidence="1">
    <location>
        <position position="361"/>
    </location>
</feature>
<feature type="glycosylation site" description="N-linked (GlcNAc...) asparagine" evidence="3">
    <location>
        <position position="8"/>
    </location>
</feature>
<feature type="glycosylation site" description="N-linked (GlcNAc...) asparagine" evidence="3">
    <location>
        <position position="26"/>
    </location>
</feature>
<feature type="disulfide bond" evidence="4">
    <location>
        <begin position="110"/>
        <end position="196"/>
    </location>
</feature>
<feature type="disulfide bond" evidence="4">
    <location>
        <begin position="189"/>
        <end position="195"/>
    </location>
</feature>
<feature type="sequence variant" description="In allele B3AR-D." evidence="6">
    <original>V</original>
    <variation>A</variation>
    <location>
        <position position="52"/>
    </location>
</feature>
<feature type="sequence variant" description="In allele B3AR-A and allele B3AR-B/F." evidence="6">
    <original>A</original>
    <variation>V</variation>
    <location>
        <position position="270"/>
    </location>
</feature>
<feature type="sequence variant" description="In allele B3AR-D." evidence="6">
    <original>L</original>
    <variation>V</variation>
    <location>
        <position position="322"/>
    </location>
</feature>
<feature type="sequence variant" description="In allele B3AR-A." evidence="6">
    <original>R</original>
    <variation>Q</variation>
    <location>
        <position position="376"/>
    </location>
</feature>
<feature type="sequence conflict" description="In Ref. 1; AAD26147." evidence="7" ref="1">
    <original>S</original>
    <variation>F</variation>
    <location>
        <position position="10"/>
    </location>
</feature>
<feature type="sequence conflict" description="In Ref. 1; AAD26147." evidence="7" ref="1">
    <original>A</original>
    <variation>D</variation>
    <location>
        <position position="231"/>
    </location>
</feature>
<organism>
    <name type="scientific">Ovis aries</name>
    <name type="common">Sheep</name>
    <dbReference type="NCBI Taxonomy" id="9940"/>
    <lineage>
        <taxon>Eukaryota</taxon>
        <taxon>Metazoa</taxon>
        <taxon>Chordata</taxon>
        <taxon>Craniata</taxon>
        <taxon>Vertebrata</taxon>
        <taxon>Euteleostomi</taxon>
        <taxon>Mammalia</taxon>
        <taxon>Eutheria</taxon>
        <taxon>Laurasiatheria</taxon>
        <taxon>Artiodactyla</taxon>
        <taxon>Ruminantia</taxon>
        <taxon>Pecora</taxon>
        <taxon>Bovidae</taxon>
        <taxon>Caprinae</taxon>
        <taxon>Ovis</taxon>
    </lineage>
</organism>
<keyword id="KW-1003">Cell membrane</keyword>
<keyword id="KW-1015">Disulfide bond</keyword>
<keyword id="KW-0297">G-protein coupled receptor</keyword>
<keyword id="KW-0325">Glycoprotein</keyword>
<keyword id="KW-0449">Lipoprotein</keyword>
<keyword id="KW-0472">Membrane</keyword>
<keyword id="KW-0564">Palmitate</keyword>
<keyword id="KW-0675">Receptor</keyword>
<keyword id="KW-1185">Reference proteome</keyword>
<keyword id="KW-0807">Transducer</keyword>
<keyword id="KW-0812">Transmembrane</keyword>
<keyword id="KW-1133">Transmembrane helix</keyword>
<evidence type="ECO:0000250" key="1"/>
<evidence type="ECO:0000250" key="2">
    <source>
        <dbReference type="UniProtKB" id="P13945"/>
    </source>
</evidence>
<evidence type="ECO:0000255" key="3"/>
<evidence type="ECO:0000255" key="4">
    <source>
        <dbReference type="PROSITE-ProRule" id="PRU00521"/>
    </source>
</evidence>
<evidence type="ECO:0000256" key="5">
    <source>
        <dbReference type="SAM" id="MobiDB-lite"/>
    </source>
</evidence>
<evidence type="ECO:0000269" key="6">
    <source>
    </source>
</evidence>
<evidence type="ECO:0000305" key="7"/>